<evidence type="ECO:0000250" key="1"/>
<evidence type="ECO:0000255" key="2"/>
<evidence type="ECO:0000305" key="3"/>
<organism>
    <name type="scientific">Pan troglodytes</name>
    <name type="common">Chimpanzee</name>
    <dbReference type="NCBI Taxonomy" id="9598"/>
    <lineage>
        <taxon>Eukaryota</taxon>
        <taxon>Metazoa</taxon>
        <taxon>Chordata</taxon>
        <taxon>Craniata</taxon>
        <taxon>Vertebrata</taxon>
        <taxon>Euteleostomi</taxon>
        <taxon>Mammalia</taxon>
        <taxon>Eutheria</taxon>
        <taxon>Euarchontoglires</taxon>
        <taxon>Primates</taxon>
        <taxon>Haplorrhini</taxon>
        <taxon>Catarrhini</taxon>
        <taxon>Hominidae</taxon>
        <taxon>Pan</taxon>
    </lineage>
</organism>
<dbReference type="EMBL" id="AY724881">
    <property type="protein sequence ID" value="AAU21103.1"/>
    <property type="molecule type" value="Genomic_DNA"/>
</dbReference>
<dbReference type="RefSeq" id="NP_001009141.1">
    <property type="nucleotide sequence ID" value="NM_001009141.1"/>
</dbReference>
<dbReference type="SMR" id="Q646B6"/>
<dbReference type="FunCoup" id="Q646B6">
    <property type="interactions" value="193"/>
</dbReference>
<dbReference type="STRING" id="9598.ENSPTRP00000054728"/>
<dbReference type="GlyCosmos" id="Q646B6">
    <property type="glycosylation" value="2 sites, No reported glycans"/>
</dbReference>
<dbReference type="PaxDb" id="9598-ENSPTRP00000054728"/>
<dbReference type="Ensembl" id="ENSPTRT00000062175.3">
    <property type="protein sequence ID" value="ENSPTRP00000054728.2"/>
    <property type="gene ID" value="ENSPTRG00000032539.4"/>
</dbReference>
<dbReference type="GeneID" id="493891"/>
<dbReference type="KEGG" id="ptr:493891"/>
<dbReference type="CTD" id="50838"/>
<dbReference type="VGNC" id="VGNC:13477">
    <property type="gene designation" value="TAS2R13"/>
</dbReference>
<dbReference type="eggNOG" id="ENOG502TE6X">
    <property type="taxonomic scope" value="Eukaryota"/>
</dbReference>
<dbReference type="GeneTree" id="ENSGT01100000263477"/>
<dbReference type="HOGENOM" id="CLU_072337_2_0_1"/>
<dbReference type="InParanoid" id="Q646B6"/>
<dbReference type="OMA" id="KMQLNYK"/>
<dbReference type="OrthoDB" id="12548at9604"/>
<dbReference type="TreeFam" id="TF335891"/>
<dbReference type="Proteomes" id="UP000002277">
    <property type="component" value="Chromosome 12"/>
</dbReference>
<dbReference type="Bgee" id="ENSPTRG00000032539">
    <property type="expression patterns" value="Expressed in pituitary gland and 8 other cell types or tissues"/>
</dbReference>
<dbReference type="GO" id="GO:0016020">
    <property type="term" value="C:membrane"/>
    <property type="evidence" value="ECO:0000318"/>
    <property type="project" value="GO_Central"/>
</dbReference>
<dbReference type="GO" id="GO:0005886">
    <property type="term" value="C:plasma membrane"/>
    <property type="evidence" value="ECO:0007669"/>
    <property type="project" value="UniProtKB-ARBA"/>
</dbReference>
<dbReference type="GO" id="GO:0033038">
    <property type="term" value="F:bitter taste receptor activity"/>
    <property type="evidence" value="ECO:0000318"/>
    <property type="project" value="GO_Central"/>
</dbReference>
<dbReference type="GO" id="GO:0004930">
    <property type="term" value="F:G protein-coupled receptor activity"/>
    <property type="evidence" value="ECO:0007669"/>
    <property type="project" value="UniProtKB-KW"/>
</dbReference>
<dbReference type="GO" id="GO:0001580">
    <property type="term" value="P:detection of chemical stimulus involved in sensory perception of bitter taste"/>
    <property type="evidence" value="ECO:0000318"/>
    <property type="project" value="GO_Central"/>
</dbReference>
<dbReference type="GO" id="GO:0032467">
    <property type="term" value="P:positive regulation of cytokinesis"/>
    <property type="evidence" value="ECO:0007669"/>
    <property type="project" value="Ensembl"/>
</dbReference>
<dbReference type="FunFam" id="1.20.1070.10:FF:000042">
    <property type="entry name" value="Taste receptor type 2 member 7"/>
    <property type="match status" value="1"/>
</dbReference>
<dbReference type="Gene3D" id="1.20.1070.10">
    <property type="entry name" value="Rhodopsin 7-helix transmembrane proteins"/>
    <property type="match status" value="1"/>
</dbReference>
<dbReference type="InterPro" id="IPR007960">
    <property type="entry name" value="TAS2R"/>
</dbReference>
<dbReference type="PANTHER" id="PTHR11394">
    <property type="entry name" value="TASTE RECEPTOR TYPE 2"/>
    <property type="match status" value="1"/>
</dbReference>
<dbReference type="PANTHER" id="PTHR11394:SF28">
    <property type="entry name" value="TASTE RECEPTOR TYPE 2 MEMBER 13"/>
    <property type="match status" value="1"/>
</dbReference>
<dbReference type="Pfam" id="PF05296">
    <property type="entry name" value="TAS2R"/>
    <property type="match status" value="1"/>
</dbReference>
<dbReference type="SUPFAM" id="SSF81321">
    <property type="entry name" value="Family A G protein-coupled receptor-like"/>
    <property type="match status" value="1"/>
</dbReference>
<protein>
    <recommendedName>
        <fullName>Taste receptor type 2 member 13</fullName>
        <shortName>T2R13</shortName>
    </recommendedName>
</protein>
<keyword id="KW-0297">G-protein coupled receptor</keyword>
<keyword id="KW-0325">Glycoprotein</keyword>
<keyword id="KW-0472">Membrane</keyword>
<keyword id="KW-0675">Receptor</keyword>
<keyword id="KW-1185">Reference proteome</keyword>
<keyword id="KW-0716">Sensory transduction</keyword>
<keyword id="KW-0919">Taste</keyword>
<keyword id="KW-0807">Transducer</keyword>
<keyword id="KW-0812">Transmembrane</keyword>
<keyword id="KW-1133">Transmembrane helix</keyword>
<comment type="function">
    <text evidence="1">Receptor that may play a role in the perception of bitterness and is gustducin-linked. May play a role in sensing the chemical composition of the gastrointestinal content. The activity of this receptor may stimulate alpha gustducin, mediate PLC-beta-2 activation and lead to the gating of TRPM5 (By similarity).</text>
</comment>
<comment type="subcellular location">
    <subcellularLocation>
        <location>Membrane</location>
        <topology>Multi-pass membrane protein</topology>
    </subcellularLocation>
</comment>
<comment type="miscellaneous">
    <text>Most taste cells may be activated by a limited number of bitter compounds; individual taste cells can discriminate among bitter stimuli.</text>
</comment>
<comment type="similarity">
    <text evidence="3">Belongs to the G-protein coupled receptor T2R family.</text>
</comment>
<gene>
    <name type="primary">TAS2R13</name>
</gene>
<proteinExistence type="inferred from homology"/>
<accession>Q646B6</accession>
<name>T2R13_PANTR</name>
<reference key="1">
    <citation type="journal article" date="2005" name="Mol. Biol. Evol.">
        <title>Evolution of bitter taste receptors in humans and apes.</title>
        <authorList>
            <person name="Fischer A."/>
            <person name="Gilad Y."/>
            <person name="Man O."/>
            <person name="Paeaebo S."/>
        </authorList>
    </citation>
    <scope>NUCLEOTIDE SEQUENCE [GENOMIC DNA]</scope>
</reference>
<feature type="chain" id="PRO_0000082249" description="Taste receptor type 2 member 13">
    <location>
        <begin position="1"/>
        <end position="303"/>
    </location>
</feature>
<feature type="topological domain" description="Extracellular" evidence="2">
    <location>
        <begin position="1"/>
        <end position="7"/>
    </location>
</feature>
<feature type="transmembrane region" description="Helical; Name=1" evidence="2">
    <location>
        <begin position="8"/>
        <end position="28"/>
    </location>
</feature>
<feature type="topological domain" description="Cytoplasmic" evidence="2">
    <location>
        <begin position="29"/>
        <end position="55"/>
    </location>
</feature>
<feature type="transmembrane region" description="Helical; Name=2" evidence="2">
    <location>
        <begin position="56"/>
        <end position="76"/>
    </location>
</feature>
<feature type="topological domain" description="Extracellular" evidence="2">
    <location>
        <begin position="77"/>
        <end position="85"/>
    </location>
</feature>
<feature type="transmembrane region" description="Helical; Name=3" evidence="2">
    <location>
        <begin position="86"/>
        <end position="106"/>
    </location>
</feature>
<feature type="topological domain" description="Cytoplasmic" evidence="2">
    <location>
        <begin position="107"/>
        <end position="128"/>
    </location>
</feature>
<feature type="transmembrane region" description="Helical; Name=4" evidence="2">
    <location>
        <begin position="129"/>
        <end position="149"/>
    </location>
</feature>
<feature type="topological domain" description="Extracellular" evidence="2">
    <location>
        <begin position="150"/>
        <end position="184"/>
    </location>
</feature>
<feature type="transmembrane region" description="Helical; Name=5" evidence="2">
    <location>
        <begin position="185"/>
        <end position="205"/>
    </location>
</feature>
<feature type="topological domain" description="Cytoplasmic" evidence="2">
    <location>
        <begin position="206"/>
        <end position="232"/>
    </location>
</feature>
<feature type="transmembrane region" description="Helical; Name=6" evidence="2">
    <location>
        <begin position="233"/>
        <end position="253"/>
    </location>
</feature>
<feature type="topological domain" description="Extracellular" evidence="2">
    <location>
        <begin position="254"/>
        <end position="261"/>
    </location>
</feature>
<feature type="transmembrane region" description="Helical; Name=7" evidence="2">
    <location>
        <begin position="262"/>
        <end position="282"/>
    </location>
</feature>
<feature type="topological domain" description="Cytoplasmic" evidence="2">
    <location>
        <begin position="283"/>
        <end position="303"/>
    </location>
</feature>
<feature type="glycosylation site" description="N-linked (GlcNAc...) asparagine" evidence="2">
    <location>
        <position position="162"/>
    </location>
</feature>
<feature type="glycosylation site" description="N-linked (GlcNAc...) asparagine" evidence="2">
    <location>
        <position position="166"/>
    </location>
</feature>
<sequence>MESALPSIFTLVIIAEFIIGNLSNGFIVLINCIDWVSKRELSSVDKLLIILAISRIGLIWEILVSWFLALHSLAIFVSGTGLRIMIFSWIVSNHFNLWLATILSIFYLLKIASFSSPAFLYLKRRVNKVILMILLGTLVFLFLNLIQINMLIKDWLDRYERNTTWNFSMSDFETFSVSVRFTMTMFSLTPFTVAFISFLLLVFSLQKHLQKMQLNYKGHRDPRTKVHTNALKIVISFLLLYASFFLSILISWISELYQNTVIYMLCETIGAFYPSSHSFLLILGNAKLRQAFLLVAAKVWAKR</sequence>